<name>PSMA4_STAAR</name>
<evidence type="ECO:0000250" key="1">
    <source>
        <dbReference type="UniProtKB" id="A9JX08"/>
    </source>
</evidence>
<evidence type="ECO:0000305" key="2"/>
<protein>
    <recommendedName>
        <fullName>Phenol-soluble modulin alpha 4 peptide</fullName>
    </recommendedName>
</protein>
<comment type="function">
    <text evidence="1">Peptide which can recruit, activate and subsequently lyse human neutrophils, thus eliminating the main cellular defense against infection.</text>
</comment>
<comment type="similarity">
    <text evidence="2">Belongs to the phenol-soluble modulin alpha peptides family.</text>
</comment>
<feature type="peptide" id="PRO_0000345081" description="Phenol-soluble modulin alpha 4 peptide">
    <location>
        <begin position="1"/>
        <end position="20"/>
    </location>
</feature>
<reference key="1">
    <citation type="journal article" date="2004" name="Proc. Natl. Acad. Sci. U.S.A.">
        <title>Complete genomes of two clinical Staphylococcus aureus strains: evidence for the rapid evolution of virulence and drug resistance.</title>
        <authorList>
            <person name="Holden M.T.G."/>
            <person name="Feil E.J."/>
            <person name="Lindsay J.A."/>
            <person name="Peacock S.J."/>
            <person name="Day N.P.J."/>
            <person name="Enright M.C."/>
            <person name="Foster T.J."/>
            <person name="Moore C.E."/>
            <person name="Hurst L."/>
            <person name="Atkin R."/>
            <person name="Barron A."/>
            <person name="Bason N."/>
            <person name="Bentley S.D."/>
            <person name="Chillingworth C."/>
            <person name="Chillingworth T."/>
            <person name="Churcher C."/>
            <person name="Clark L."/>
            <person name="Corton C."/>
            <person name="Cronin A."/>
            <person name="Doggett J."/>
            <person name="Dowd L."/>
            <person name="Feltwell T."/>
            <person name="Hance Z."/>
            <person name="Harris B."/>
            <person name="Hauser H."/>
            <person name="Holroyd S."/>
            <person name="Jagels K."/>
            <person name="James K.D."/>
            <person name="Lennard N."/>
            <person name="Line A."/>
            <person name="Mayes R."/>
            <person name="Moule S."/>
            <person name="Mungall K."/>
            <person name="Ormond D."/>
            <person name="Quail M.A."/>
            <person name="Rabbinowitsch E."/>
            <person name="Rutherford K.M."/>
            <person name="Sanders M."/>
            <person name="Sharp S."/>
            <person name="Simmonds M."/>
            <person name="Stevens K."/>
            <person name="Whitehead S."/>
            <person name="Barrell B.G."/>
            <person name="Spratt B.G."/>
            <person name="Parkhill J."/>
        </authorList>
    </citation>
    <scope>NUCLEOTIDE SEQUENCE [LARGE SCALE GENOMIC DNA]</scope>
    <source>
        <strain>MRSA252</strain>
    </source>
</reference>
<accession>P0C825</accession>
<gene>
    <name type="primary">psmA4</name>
    <name type="ordered locus">SAR0451.1</name>
</gene>
<sequence length="20" mass="2172">MAIVGTIIKIIKAIIDIFAK</sequence>
<proteinExistence type="inferred from homology"/>
<dbReference type="EMBL" id="BX571856">
    <property type="status" value="NOT_ANNOTATED_CDS"/>
    <property type="molecule type" value="Genomic_DNA"/>
</dbReference>
<dbReference type="SMR" id="P0C825"/>
<dbReference type="Proteomes" id="UP000000596">
    <property type="component" value="Chromosome"/>
</dbReference>
<dbReference type="GO" id="GO:0031640">
    <property type="term" value="P:killing of cells of another organism"/>
    <property type="evidence" value="ECO:0007669"/>
    <property type="project" value="UniProtKB-KW"/>
</dbReference>
<dbReference type="InterPro" id="IPR031429">
    <property type="entry name" value="PSM_alpha"/>
</dbReference>
<dbReference type="Pfam" id="PF17063">
    <property type="entry name" value="PSMalpha"/>
    <property type="match status" value="1"/>
</dbReference>
<keyword id="KW-0204">Cytolysis</keyword>
<keyword id="KW-0843">Virulence</keyword>
<organism>
    <name type="scientific">Staphylococcus aureus (strain MRSA252)</name>
    <dbReference type="NCBI Taxonomy" id="282458"/>
    <lineage>
        <taxon>Bacteria</taxon>
        <taxon>Bacillati</taxon>
        <taxon>Bacillota</taxon>
        <taxon>Bacilli</taxon>
        <taxon>Bacillales</taxon>
        <taxon>Staphylococcaceae</taxon>
        <taxon>Staphylococcus</taxon>
    </lineage>
</organism>